<reference key="1">
    <citation type="journal article" date="2003" name="Proc. Natl. Acad. Sci. U.S.A.">
        <title>Genome sequence of the cyanobacterium Prochlorococcus marinus SS120, a nearly minimal oxyphototrophic genome.</title>
        <authorList>
            <person name="Dufresne A."/>
            <person name="Salanoubat M."/>
            <person name="Partensky F."/>
            <person name="Artiguenave F."/>
            <person name="Axmann I.M."/>
            <person name="Barbe V."/>
            <person name="Duprat S."/>
            <person name="Galperin M.Y."/>
            <person name="Koonin E.V."/>
            <person name="Le Gall F."/>
            <person name="Makarova K.S."/>
            <person name="Ostrowski M."/>
            <person name="Oztas S."/>
            <person name="Robert C."/>
            <person name="Rogozin I.B."/>
            <person name="Scanlan D.J."/>
            <person name="Tandeau de Marsac N."/>
            <person name="Weissenbach J."/>
            <person name="Wincker P."/>
            <person name="Wolf Y.I."/>
            <person name="Hess W.R."/>
        </authorList>
    </citation>
    <scope>NUCLEOTIDE SEQUENCE [LARGE SCALE GENOMIC DNA]</scope>
    <source>
        <strain>SARG / CCMP1375 / SS120</strain>
    </source>
</reference>
<dbReference type="EMBL" id="AE017126">
    <property type="protein sequence ID" value="AAQ00470.1"/>
    <property type="molecule type" value="Genomic_DNA"/>
</dbReference>
<dbReference type="RefSeq" id="NP_875817.1">
    <property type="nucleotide sequence ID" value="NC_005042.1"/>
</dbReference>
<dbReference type="RefSeq" id="WP_011125577.1">
    <property type="nucleotide sequence ID" value="NC_005042.1"/>
</dbReference>
<dbReference type="SMR" id="Q7VAN2"/>
<dbReference type="STRING" id="167539.Pro_1426"/>
<dbReference type="EnsemblBacteria" id="AAQ00470">
    <property type="protein sequence ID" value="AAQ00470"/>
    <property type="gene ID" value="Pro_1426"/>
</dbReference>
<dbReference type="KEGG" id="pma:Pro_1426"/>
<dbReference type="PATRIC" id="fig|167539.5.peg.1492"/>
<dbReference type="eggNOG" id="COG0211">
    <property type="taxonomic scope" value="Bacteria"/>
</dbReference>
<dbReference type="HOGENOM" id="CLU_095424_4_0_3"/>
<dbReference type="OrthoDB" id="9803474at2"/>
<dbReference type="Proteomes" id="UP000001420">
    <property type="component" value="Chromosome"/>
</dbReference>
<dbReference type="GO" id="GO:0022625">
    <property type="term" value="C:cytosolic large ribosomal subunit"/>
    <property type="evidence" value="ECO:0007669"/>
    <property type="project" value="TreeGrafter"/>
</dbReference>
<dbReference type="GO" id="GO:0003735">
    <property type="term" value="F:structural constituent of ribosome"/>
    <property type="evidence" value="ECO:0007669"/>
    <property type="project" value="InterPro"/>
</dbReference>
<dbReference type="GO" id="GO:0006412">
    <property type="term" value="P:translation"/>
    <property type="evidence" value="ECO:0007669"/>
    <property type="project" value="UniProtKB-UniRule"/>
</dbReference>
<dbReference type="FunFam" id="2.40.50.100:FF:000004">
    <property type="entry name" value="50S ribosomal protein L27"/>
    <property type="match status" value="1"/>
</dbReference>
<dbReference type="Gene3D" id="2.40.50.100">
    <property type="match status" value="1"/>
</dbReference>
<dbReference type="HAMAP" id="MF_00539">
    <property type="entry name" value="Ribosomal_bL27"/>
    <property type="match status" value="1"/>
</dbReference>
<dbReference type="InterPro" id="IPR001684">
    <property type="entry name" value="Ribosomal_bL27"/>
</dbReference>
<dbReference type="InterPro" id="IPR018261">
    <property type="entry name" value="Ribosomal_bL27_CS"/>
</dbReference>
<dbReference type="NCBIfam" id="TIGR00062">
    <property type="entry name" value="L27"/>
    <property type="match status" value="1"/>
</dbReference>
<dbReference type="PANTHER" id="PTHR15893:SF0">
    <property type="entry name" value="LARGE RIBOSOMAL SUBUNIT PROTEIN BL27M"/>
    <property type="match status" value="1"/>
</dbReference>
<dbReference type="PANTHER" id="PTHR15893">
    <property type="entry name" value="RIBOSOMAL PROTEIN L27"/>
    <property type="match status" value="1"/>
</dbReference>
<dbReference type="Pfam" id="PF01016">
    <property type="entry name" value="Ribosomal_L27"/>
    <property type="match status" value="1"/>
</dbReference>
<dbReference type="PRINTS" id="PR00063">
    <property type="entry name" value="RIBOSOMALL27"/>
</dbReference>
<dbReference type="SUPFAM" id="SSF110324">
    <property type="entry name" value="Ribosomal L27 protein-like"/>
    <property type="match status" value="1"/>
</dbReference>
<dbReference type="PROSITE" id="PS00831">
    <property type="entry name" value="RIBOSOMAL_L27"/>
    <property type="match status" value="1"/>
</dbReference>
<sequence>MAHKKGTGSTRNGRDSNSKRLGVKAYGGEKVTAGSILIRQRGTSVLPGANVGQGKDDTLFALVDGIVNFETIKRSLKKRKRISVSLA</sequence>
<organism>
    <name type="scientific">Prochlorococcus marinus (strain SARG / CCMP1375 / SS120)</name>
    <dbReference type="NCBI Taxonomy" id="167539"/>
    <lineage>
        <taxon>Bacteria</taxon>
        <taxon>Bacillati</taxon>
        <taxon>Cyanobacteriota</taxon>
        <taxon>Cyanophyceae</taxon>
        <taxon>Synechococcales</taxon>
        <taxon>Prochlorococcaceae</taxon>
        <taxon>Prochlorococcus</taxon>
    </lineage>
</organism>
<protein>
    <recommendedName>
        <fullName evidence="1">Large ribosomal subunit protein bL27</fullName>
    </recommendedName>
    <alternativeName>
        <fullName evidence="3">50S ribosomal protein L27</fullName>
    </alternativeName>
</protein>
<name>RL27_PROMA</name>
<evidence type="ECO:0000255" key="1">
    <source>
        <dbReference type="HAMAP-Rule" id="MF_00539"/>
    </source>
</evidence>
<evidence type="ECO:0000256" key="2">
    <source>
        <dbReference type="SAM" id="MobiDB-lite"/>
    </source>
</evidence>
<evidence type="ECO:0000305" key="3"/>
<accession>Q7VAN2</accession>
<proteinExistence type="inferred from homology"/>
<feature type="chain" id="PRO_0000181144" description="Large ribosomal subunit protein bL27">
    <location>
        <begin position="1"/>
        <end position="87"/>
    </location>
</feature>
<feature type="region of interest" description="Disordered" evidence="2">
    <location>
        <begin position="1"/>
        <end position="26"/>
    </location>
</feature>
<gene>
    <name evidence="1" type="primary">rpmA</name>
    <name evidence="1" type="synonym">rpl27</name>
    <name type="ordered locus">Pro_1426</name>
</gene>
<comment type="similarity">
    <text evidence="1">Belongs to the bacterial ribosomal protein bL27 family.</text>
</comment>
<keyword id="KW-1185">Reference proteome</keyword>
<keyword id="KW-0687">Ribonucleoprotein</keyword>
<keyword id="KW-0689">Ribosomal protein</keyword>